<comment type="function">
    <text evidence="1">Lignin degradation and detoxification of lignin-derived products.</text>
</comment>
<comment type="catalytic activity">
    <reaction>
        <text>4 hydroquinone + O2 = 4 benzosemiquinone + 2 H2O</text>
        <dbReference type="Rhea" id="RHEA:11276"/>
        <dbReference type="ChEBI" id="CHEBI:15377"/>
        <dbReference type="ChEBI" id="CHEBI:15379"/>
        <dbReference type="ChEBI" id="CHEBI:17594"/>
        <dbReference type="ChEBI" id="CHEBI:17977"/>
        <dbReference type="EC" id="1.10.3.2"/>
    </reaction>
</comment>
<comment type="cofactor">
    <cofactor evidence="1">
        <name>Cu cation</name>
        <dbReference type="ChEBI" id="CHEBI:23378"/>
    </cofactor>
    <text evidence="1">Binds 4 Cu cations per monomer.</text>
</comment>
<comment type="subcellular location">
    <subcellularLocation>
        <location evidence="3">Secreted</location>
        <location evidence="3">Extracellular space</location>
        <location evidence="3">Apoplast</location>
    </subcellularLocation>
</comment>
<comment type="similarity">
    <text evidence="3">Belongs to the multicopper oxidase family.</text>
</comment>
<proteinExistence type="evidence at transcript level"/>
<evidence type="ECO:0000250" key="1"/>
<evidence type="ECO:0000255" key="2"/>
<evidence type="ECO:0000305" key="3"/>
<protein>
    <recommendedName>
        <fullName>Laccase-6</fullName>
        <ecNumber>1.10.3.2</ecNumber>
    </recommendedName>
    <alternativeName>
        <fullName>Benzenediol:oxygen oxidoreductase 6</fullName>
    </alternativeName>
    <alternativeName>
        <fullName>Diphenol oxidase 6</fullName>
    </alternativeName>
    <alternativeName>
        <fullName>Urishiol oxidase 6</fullName>
    </alternativeName>
</protein>
<accession>Q5N7A3</accession>
<accession>A0A0P0VAL3</accession>
<sequence>MSCSWMIPVFAILAFVASAAQADVVEHTFNVATLSLPRICQPGNTSVTAVNGRVPGPQVEAREGDTVVIHVINDSPYNVTVHWHGVFQRGTPWADGPAMVTQCPIRPGHRYTYRFAVAGQEGTLWWHAHSSYMRATVYGALVIRPRRAGGYPFPTPYEEKTVLLGEWWNGDPVALESQSFSTGIPAPNADAYTINGMPGDSYLCPETTNRIAKFEVRRDKTYLLRIINAALNTAFFFKVAGHTFTVVAADASYTEPYATDVIVIAPGQTVDALMAADASPGCYHMAISSYQSAIPFPPRPAGFNGNTSTAIVEYVDATATTDAGSPVLPVMPKPNDTYTANQFYTSLTALIRPGRRTVPLTVDTRMLVTVGLGFSSCQPEQTQCNRSAPVVLANMNNVSFALPNTVSMLEALYRNTADGVYTRDFPDQPPVAFDYTSRGLLGNSPLASTGSPSTKVKTLRYNATVEMVLQNTALVGLESHPMHLHGFNFFVVAQGFGNNDGEAAGAGEFNLVNPQERNTVAVPTGGWAVIRFVADNPGMWAMHCHIDSHFAIGLAMVFEVESGPTPGTTLPPPPPDLPQC</sequence>
<gene>
    <name type="primary">LAC6</name>
    <name type="ordered locus">Os01g0850550</name>
    <name type="ordered locus">LOC_Os01g63180</name>
    <name type="ORF">OsJ_003986</name>
    <name type="ORF">P0529H11.21</name>
</gene>
<dbReference type="EC" id="1.10.3.2"/>
<dbReference type="EMBL" id="AP003242">
    <property type="protein sequence ID" value="BAD81778.1"/>
    <property type="molecule type" value="Genomic_DNA"/>
</dbReference>
<dbReference type="EMBL" id="AP004072">
    <property type="protein sequence ID" value="BAD82646.1"/>
    <property type="molecule type" value="Genomic_DNA"/>
</dbReference>
<dbReference type="EMBL" id="AP014957">
    <property type="protein sequence ID" value="BAS75242.1"/>
    <property type="molecule type" value="Genomic_DNA"/>
</dbReference>
<dbReference type="EMBL" id="CM000138">
    <property type="status" value="NOT_ANNOTATED_CDS"/>
    <property type="molecule type" value="Genomic_DNA"/>
</dbReference>
<dbReference type="SMR" id="Q5N7A3"/>
<dbReference type="FunCoup" id="Q5N7A3">
    <property type="interactions" value="17"/>
</dbReference>
<dbReference type="STRING" id="39947.Q5N7A3"/>
<dbReference type="GlyCosmos" id="Q5N7A3">
    <property type="glycosylation" value="7 sites, No reported glycans"/>
</dbReference>
<dbReference type="PaxDb" id="39947-Q5N7A3"/>
<dbReference type="EnsemblPlants" id="Os01t0850550-00">
    <property type="protein sequence ID" value="Os01t0850550-00"/>
    <property type="gene ID" value="Os01g0850550"/>
</dbReference>
<dbReference type="GeneID" id="107276446"/>
<dbReference type="Gramene" id="Os01t0850550-00">
    <property type="protein sequence ID" value="Os01t0850550-00"/>
    <property type="gene ID" value="Os01g0850550"/>
</dbReference>
<dbReference type="KEGG" id="osa:107276446"/>
<dbReference type="eggNOG" id="KOG1263">
    <property type="taxonomic scope" value="Eukaryota"/>
</dbReference>
<dbReference type="HOGENOM" id="CLU_006504_6_3_1"/>
<dbReference type="InParanoid" id="Q5N7A3"/>
<dbReference type="OMA" id="NGMYYME"/>
<dbReference type="OrthoDB" id="2121828at2759"/>
<dbReference type="Proteomes" id="UP000000763">
    <property type="component" value="Chromosome 1"/>
</dbReference>
<dbReference type="Proteomes" id="UP000007752">
    <property type="component" value="Chromosome 1"/>
</dbReference>
<dbReference type="Proteomes" id="UP000059680">
    <property type="component" value="Chromosome 1"/>
</dbReference>
<dbReference type="GO" id="GO:0048046">
    <property type="term" value="C:apoplast"/>
    <property type="evidence" value="ECO:0007669"/>
    <property type="project" value="UniProtKB-SubCell"/>
</dbReference>
<dbReference type="GO" id="GO:0005507">
    <property type="term" value="F:copper ion binding"/>
    <property type="evidence" value="ECO:0007669"/>
    <property type="project" value="InterPro"/>
</dbReference>
<dbReference type="GO" id="GO:0052716">
    <property type="term" value="F:hydroquinone:oxygen oxidoreductase activity"/>
    <property type="evidence" value="ECO:0007669"/>
    <property type="project" value="UniProtKB-EC"/>
</dbReference>
<dbReference type="GO" id="GO:0016491">
    <property type="term" value="F:oxidoreductase activity"/>
    <property type="evidence" value="ECO:0000318"/>
    <property type="project" value="GO_Central"/>
</dbReference>
<dbReference type="GO" id="GO:0046274">
    <property type="term" value="P:lignin catabolic process"/>
    <property type="evidence" value="ECO:0007669"/>
    <property type="project" value="UniProtKB-KW"/>
</dbReference>
<dbReference type="CDD" id="cd13849">
    <property type="entry name" value="CuRO_1_LCC_plant"/>
    <property type="match status" value="1"/>
</dbReference>
<dbReference type="CDD" id="cd13875">
    <property type="entry name" value="CuRO_2_LCC_plant"/>
    <property type="match status" value="1"/>
</dbReference>
<dbReference type="Gene3D" id="2.60.40.420">
    <property type="entry name" value="Cupredoxins - blue copper proteins"/>
    <property type="match status" value="3"/>
</dbReference>
<dbReference type="InterPro" id="IPR011707">
    <property type="entry name" value="Cu-oxidase-like_N"/>
</dbReference>
<dbReference type="InterPro" id="IPR001117">
    <property type="entry name" value="Cu-oxidase_2nd"/>
</dbReference>
<dbReference type="InterPro" id="IPR011706">
    <property type="entry name" value="Cu-oxidase_C"/>
</dbReference>
<dbReference type="InterPro" id="IPR045087">
    <property type="entry name" value="Cu-oxidase_fam"/>
</dbReference>
<dbReference type="InterPro" id="IPR033138">
    <property type="entry name" value="Cu_oxidase_CS"/>
</dbReference>
<dbReference type="InterPro" id="IPR002355">
    <property type="entry name" value="Cu_oxidase_Cu_BS"/>
</dbReference>
<dbReference type="InterPro" id="IPR008972">
    <property type="entry name" value="Cupredoxin"/>
</dbReference>
<dbReference type="InterPro" id="IPR034288">
    <property type="entry name" value="CuRO_1_LCC"/>
</dbReference>
<dbReference type="InterPro" id="IPR034285">
    <property type="entry name" value="CuRO_2_LCC"/>
</dbReference>
<dbReference type="InterPro" id="IPR017761">
    <property type="entry name" value="Laccase"/>
</dbReference>
<dbReference type="NCBIfam" id="TIGR03389">
    <property type="entry name" value="laccase"/>
    <property type="match status" value="1"/>
</dbReference>
<dbReference type="PANTHER" id="PTHR11709:SF339">
    <property type="entry name" value="LACCASE-6"/>
    <property type="match status" value="1"/>
</dbReference>
<dbReference type="PANTHER" id="PTHR11709">
    <property type="entry name" value="MULTI-COPPER OXIDASE"/>
    <property type="match status" value="1"/>
</dbReference>
<dbReference type="Pfam" id="PF00394">
    <property type="entry name" value="Cu-oxidase"/>
    <property type="match status" value="1"/>
</dbReference>
<dbReference type="Pfam" id="PF07731">
    <property type="entry name" value="Cu-oxidase_2"/>
    <property type="match status" value="1"/>
</dbReference>
<dbReference type="Pfam" id="PF07732">
    <property type="entry name" value="Cu-oxidase_3"/>
    <property type="match status" value="1"/>
</dbReference>
<dbReference type="SUPFAM" id="SSF49503">
    <property type="entry name" value="Cupredoxins"/>
    <property type="match status" value="3"/>
</dbReference>
<dbReference type="PROSITE" id="PS00079">
    <property type="entry name" value="MULTICOPPER_OXIDASE1"/>
    <property type="match status" value="1"/>
</dbReference>
<dbReference type="PROSITE" id="PS00080">
    <property type="entry name" value="MULTICOPPER_OXIDASE2"/>
    <property type="match status" value="1"/>
</dbReference>
<feature type="signal peptide" evidence="2">
    <location>
        <begin position="1"/>
        <end position="22"/>
    </location>
</feature>
<feature type="chain" id="PRO_0000291891" description="Laccase-6">
    <location>
        <begin position="23"/>
        <end position="580"/>
    </location>
</feature>
<feature type="domain" description="Plastocyanin-like 1">
    <location>
        <begin position="30"/>
        <end position="148"/>
    </location>
</feature>
<feature type="domain" description="Plastocyanin-like 2">
    <location>
        <begin position="158"/>
        <end position="317"/>
    </location>
</feature>
<feature type="domain" description="Plastocyanin-like 3">
    <location>
        <begin position="424"/>
        <end position="564"/>
    </location>
</feature>
<feature type="binding site" evidence="1">
    <location>
        <position position="82"/>
    </location>
    <ligand>
        <name>Cu cation</name>
        <dbReference type="ChEBI" id="CHEBI:23378"/>
        <label>1</label>
    </ligand>
</feature>
<feature type="binding site" evidence="1">
    <location>
        <position position="84"/>
    </location>
    <ligand>
        <name>Cu cation</name>
        <dbReference type="ChEBI" id="CHEBI:23378"/>
        <label>2</label>
    </ligand>
</feature>
<feature type="binding site" evidence="1">
    <location>
        <position position="127"/>
    </location>
    <ligand>
        <name>Cu cation</name>
        <dbReference type="ChEBI" id="CHEBI:23378"/>
        <label>2</label>
    </ligand>
</feature>
<feature type="binding site" evidence="1">
    <location>
        <position position="129"/>
    </location>
    <ligand>
        <name>Cu cation</name>
        <dbReference type="ChEBI" id="CHEBI:23378"/>
        <label>3</label>
    </ligand>
</feature>
<feature type="binding site" evidence="1">
    <location>
        <position position="480"/>
    </location>
    <ligand>
        <name>Cu cation</name>
        <dbReference type="ChEBI" id="CHEBI:23378"/>
        <label>4</label>
    </ligand>
</feature>
<feature type="binding site" evidence="1">
    <location>
        <position position="483"/>
    </location>
    <ligand>
        <name>Cu cation</name>
        <dbReference type="ChEBI" id="CHEBI:23378"/>
        <label>1</label>
    </ligand>
</feature>
<feature type="binding site" evidence="1">
    <location>
        <position position="485"/>
    </location>
    <ligand>
        <name>Cu cation</name>
        <dbReference type="ChEBI" id="CHEBI:23378"/>
        <label>3</label>
    </ligand>
</feature>
<feature type="binding site" evidence="1">
    <location>
        <position position="543"/>
    </location>
    <ligand>
        <name>Cu cation</name>
        <dbReference type="ChEBI" id="CHEBI:23378"/>
        <label>3</label>
    </ligand>
</feature>
<feature type="binding site" evidence="1">
    <location>
        <position position="544"/>
    </location>
    <ligand>
        <name>Cu cation</name>
        <dbReference type="ChEBI" id="CHEBI:23378"/>
        <label>4</label>
    </ligand>
</feature>
<feature type="binding site" evidence="1">
    <location>
        <position position="545"/>
    </location>
    <ligand>
        <name>Cu cation</name>
        <dbReference type="ChEBI" id="CHEBI:23378"/>
        <label>2</label>
    </ligand>
</feature>
<feature type="binding site" evidence="1">
    <location>
        <position position="549"/>
    </location>
    <ligand>
        <name>Cu cation</name>
        <dbReference type="ChEBI" id="CHEBI:23378"/>
        <label>4</label>
    </ligand>
</feature>
<feature type="glycosylation site" description="N-linked (GlcNAc...) asparagine" evidence="2">
    <location>
        <position position="44"/>
    </location>
</feature>
<feature type="glycosylation site" description="N-linked (GlcNAc...) asparagine" evidence="2">
    <location>
        <position position="78"/>
    </location>
</feature>
<feature type="glycosylation site" description="N-linked (GlcNAc...) asparagine" evidence="2">
    <location>
        <position position="306"/>
    </location>
</feature>
<feature type="glycosylation site" description="N-linked (GlcNAc...) asparagine" evidence="2">
    <location>
        <position position="335"/>
    </location>
</feature>
<feature type="glycosylation site" description="N-linked (GlcNAc...) asparagine" evidence="2">
    <location>
        <position position="385"/>
    </location>
</feature>
<feature type="glycosylation site" description="N-linked (GlcNAc...) asparagine" evidence="2">
    <location>
        <position position="397"/>
    </location>
</feature>
<feature type="glycosylation site" description="N-linked (GlcNAc...) asparagine" evidence="2">
    <location>
        <position position="462"/>
    </location>
</feature>
<keyword id="KW-0052">Apoplast</keyword>
<keyword id="KW-0186">Copper</keyword>
<keyword id="KW-0325">Glycoprotein</keyword>
<keyword id="KW-0439">Lignin degradation</keyword>
<keyword id="KW-0479">Metal-binding</keyword>
<keyword id="KW-0560">Oxidoreductase</keyword>
<keyword id="KW-1185">Reference proteome</keyword>
<keyword id="KW-0677">Repeat</keyword>
<keyword id="KW-0964">Secreted</keyword>
<keyword id="KW-0732">Signal</keyword>
<name>LAC6_ORYSJ</name>
<reference key="1">
    <citation type="journal article" date="2002" name="Nature">
        <title>The genome sequence and structure of rice chromosome 1.</title>
        <authorList>
            <person name="Sasaki T."/>
            <person name="Matsumoto T."/>
            <person name="Yamamoto K."/>
            <person name="Sakata K."/>
            <person name="Baba T."/>
            <person name="Katayose Y."/>
            <person name="Wu J."/>
            <person name="Niimura Y."/>
            <person name="Cheng Z."/>
            <person name="Nagamura Y."/>
            <person name="Antonio B.A."/>
            <person name="Kanamori H."/>
            <person name="Hosokawa S."/>
            <person name="Masukawa M."/>
            <person name="Arikawa K."/>
            <person name="Chiden Y."/>
            <person name="Hayashi M."/>
            <person name="Okamoto M."/>
            <person name="Ando T."/>
            <person name="Aoki H."/>
            <person name="Arita K."/>
            <person name="Hamada M."/>
            <person name="Harada C."/>
            <person name="Hijishita S."/>
            <person name="Honda M."/>
            <person name="Ichikawa Y."/>
            <person name="Idonuma A."/>
            <person name="Iijima M."/>
            <person name="Ikeda M."/>
            <person name="Ikeno M."/>
            <person name="Ito S."/>
            <person name="Ito T."/>
            <person name="Ito Y."/>
            <person name="Ito Y."/>
            <person name="Iwabuchi A."/>
            <person name="Kamiya K."/>
            <person name="Karasawa W."/>
            <person name="Katagiri S."/>
            <person name="Kikuta A."/>
            <person name="Kobayashi N."/>
            <person name="Kono I."/>
            <person name="Machita K."/>
            <person name="Maehara T."/>
            <person name="Mizuno H."/>
            <person name="Mizubayashi T."/>
            <person name="Mukai Y."/>
            <person name="Nagasaki H."/>
            <person name="Nakashima M."/>
            <person name="Nakama Y."/>
            <person name="Nakamichi Y."/>
            <person name="Nakamura M."/>
            <person name="Namiki N."/>
            <person name="Negishi M."/>
            <person name="Ohta I."/>
            <person name="Ono N."/>
            <person name="Saji S."/>
            <person name="Sakai K."/>
            <person name="Shibata M."/>
            <person name="Shimokawa T."/>
            <person name="Shomura A."/>
            <person name="Song J."/>
            <person name="Takazaki Y."/>
            <person name="Terasawa K."/>
            <person name="Tsuji K."/>
            <person name="Waki K."/>
            <person name="Yamagata H."/>
            <person name="Yamane H."/>
            <person name="Yoshiki S."/>
            <person name="Yoshihara R."/>
            <person name="Yukawa K."/>
            <person name="Zhong H."/>
            <person name="Iwama H."/>
            <person name="Endo T."/>
            <person name="Ito H."/>
            <person name="Hahn J.H."/>
            <person name="Kim H.-I."/>
            <person name="Eun M.-Y."/>
            <person name="Yano M."/>
            <person name="Jiang J."/>
            <person name="Gojobori T."/>
        </authorList>
    </citation>
    <scope>NUCLEOTIDE SEQUENCE [LARGE SCALE GENOMIC DNA]</scope>
    <source>
        <strain>cv. Nipponbare</strain>
    </source>
</reference>
<reference key="2">
    <citation type="journal article" date="2005" name="Nature">
        <title>The map-based sequence of the rice genome.</title>
        <authorList>
            <consortium name="International rice genome sequencing project (IRGSP)"/>
        </authorList>
    </citation>
    <scope>NUCLEOTIDE SEQUENCE [LARGE SCALE GENOMIC DNA]</scope>
    <source>
        <strain>cv. Nipponbare</strain>
    </source>
</reference>
<reference key="3">
    <citation type="journal article" date="2013" name="Rice">
        <title>Improvement of the Oryza sativa Nipponbare reference genome using next generation sequence and optical map data.</title>
        <authorList>
            <person name="Kawahara Y."/>
            <person name="de la Bastide M."/>
            <person name="Hamilton J.P."/>
            <person name="Kanamori H."/>
            <person name="McCombie W.R."/>
            <person name="Ouyang S."/>
            <person name="Schwartz D.C."/>
            <person name="Tanaka T."/>
            <person name="Wu J."/>
            <person name="Zhou S."/>
            <person name="Childs K.L."/>
            <person name="Davidson R.M."/>
            <person name="Lin H."/>
            <person name="Quesada-Ocampo L."/>
            <person name="Vaillancourt B."/>
            <person name="Sakai H."/>
            <person name="Lee S.S."/>
            <person name="Kim J."/>
            <person name="Numa H."/>
            <person name="Itoh T."/>
            <person name="Buell C.R."/>
            <person name="Matsumoto T."/>
        </authorList>
    </citation>
    <scope>GENOME REANNOTATION</scope>
    <source>
        <strain>cv. Nipponbare</strain>
    </source>
</reference>
<reference key="4">
    <citation type="journal article" date="2005" name="PLoS Biol.">
        <title>The genomes of Oryza sativa: a history of duplications.</title>
        <authorList>
            <person name="Yu J."/>
            <person name="Wang J."/>
            <person name="Lin W."/>
            <person name="Li S."/>
            <person name="Li H."/>
            <person name="Zhou J."/>
            <person name="Ni P."/>
            <person name="Dong W."/>
            <person name="Hu S."/>
            <person name="Zeng C."/>
            <person name="Zhang J."/>
            <person name="Zhang Y."/>
            <person name="Li R."/>
            <person name="Xu Z."/>
            <person name="Li S."/>
            <person name="Li X."/>
            <person name="Zheng H."/>
            <person name="Cong L."/>
            <person name="Lin L."/>
            <person name="Yin J."/>
            <person name="Geng J."/>
            <person name="Li G."/>
            <person name="Shi J."/>
            <person name="Liu J."/>
            <person name="Lv H."/>
            <person name="Li J."/>
            <person name="Wang J."/>
            <person name="Deng Y."/>
            <person name="Ran L."/>
            <person name="Shi X."/>
            <person name="Wang X."/>
            <person name="Wu Q."/>
            <person name="Li C."/>
            <person name="Ren X."/>
            <person name="Wang J."/>
            <person name="Wang X."/>
            <person name="Li D."/>
            <person name="Liu D."/>
            <person name="Zhang X."/>
            <person name="Ji Z."/>
            <person name="Zhao W."/>
            <person name="Sun Y."/>
            <person name="Zhang Z."/>
            <person name="Bao J."/>
            <person name="Han Y."/>
            <person name="Dong L."/>
            <person name="Ji J."/>
            <person name="Chen P."/>
            <person name="Wu S."/>
            <person name="Liu J."/>
            <person name="Xiao Y."/>
            <person name="Bu D."/>
            <person name="Tan J."/>
            <person name="Yang L."/>
            <person name="Ye C."/>
            <person name="Zhang J."/>
            <person name="Xu J."/>
            <person name="Zhou Y."/>
            <person name="Yu Y."/>
            <person name="Zhang B."/>
            <person name="Zhuang S."/>
            <person name="Wei H."/>
            <person name="Liu B."/>
            <person name="Lei M."/>
            <person name="Yu H."/>
            <person name="Li Y."/>
            <person name="Xu H."/>
            <person name="Wei S."/>
            <person name="He X."/>
            <person name="Fang L."/>
            <person name="Zhang Z."/>
            <person name="Zhang Y."/>
            <person name="Huang X."/>
            <person name="Su Z."/>
            <person name="Tong W."/>
            <person name="Li J."/>
            <person name="Tong Z."/>
            <person name="Li S."/>
            <person name="Ye J."/>
            <person name="Wang L."/>
            <person name="Fang L."/>
            <person name="Lei T."/>
            <person name="Chen C.-S."/>
            <person name="Chen H.-C."/>
            <person name="Xu Z."/>
            <person name="Li H."/>
            <person name="Huang H."/>
            <person name="Zhang F."/>
            <person name="Xu H."/>
            <person name="Li N."/>
            <person name="Zhao C."/>
            <person name="Li S."/>
            <person name="Dong L."/>
            <person name="Huang Y."/>
            <person name="Li L."/>
            <person name="Xi Y."/>
            <person name="Qi Q."/>
            <person name="Li W."/>
            <person name="Zhang B."/>
            <person name="Hu W."/>
            <person name="Zhang Y."/>
            <person name="Tian X."/>
            <person name="Jiao Y."/>
            <person name="Liang X."/>
            <person name="Jin J."/>
            <person name="Gao L."/>
            <person name="Zheng W."/>
            <person name="Hao B."/>
            <person name="Liu S.-M."/>
            <person name="Wang W."/>
            <person name="Yuan L."/>
            <person name="Cao M."/>
            <person name="McDermott J."/>
            <person name="Samudrala R."/>
            <person name="Wang J."/>
            <person name="Wong G.K.-S."/>
            <person name="Yang H."/>
        </authorList>
    </citation>
    <scope>NUCLEOTIDE SEQUENCE [LARGE SCALE GENOMIC DNA]</scope>
    <source>
        <strain>cv. Nipponbare</strain>
    </source>
</reference>
<organism>
    <name type="scientific">Oryza sativa subsp. japonica</name>
    <name type="common">Rice</name>
    <dbReference type="NCBI Taxonomy" id="39947"/>
    <lineage>
        <taxon>Eukaryota</taxon>
        <taxon>Viridiplantae</taxon>
        <taxon>Streptophyta</taxon>
        <taxon>Embryophyta</taxon>
        <taxon>Tracheophyta</taxon>
        <taxon>Spermatophyta</taxon>
        <taxon>Magnoliopsida</taxon>
        <taxon>Liliopsida</taxon>
        <taxon>Poales</taxon>
        <taxon>Poaceae</taxon>
        <taxon>BOP clade</taxon>
        <taxon>Oryzoideae</taxon>
        <taxon>Oryzeae</taxon>
        <taxon>Oryzinae</taxon>
        <taxon>Oryza</taxon>
        <taxon>Oryza sativa</taxon>
    </lineage>
</organism>